<protein>
    <recommendedName>
        <fullName evidence="1">Lipoyl synthase</fullName>
        <ecNumber evidence="1">2.8.1.8</ecNumber>
    </recommendedName>
    <alternativeName>
        <fullName evidence="1">Lip-syn</fullName>
        <shortName evidence="1">LS</shortName>
    </alternativeName>
    <alternativeName>
        <fullName evidence="1">Lipoate synthase</fullName>
    </alternativeName>
    <alternativeName>
        <fullName evidence="1">Lipoic acid synthase</fullName>
    </alternativeName>
    <alternativeName>
        <fullName evidence="1">Sulfur insertion protein LipA</fullName>
    </alternativeName>
</protein>
<proteinExistence type="inferred from homology"/>
<reference key="1">
    <citation type="journal article" date="2001" name="Nature">
        <title>Genome sequence of enterohaemorrhagic Escherichia coli O157:H7.</title>
        <authorList>
            <person name="Perna N.T."/>
            <person name="Plunkett G. III"/>
            <person name="Burland V."/>
            <person name="Mau B."/>
            <person name="Glasner J.D."/>
            <person name="Rose D.J."/>
            <person name="Mayhew G.F."/>
            <person name="Evans P.S."/>
            <person name="Gregor J."/>
            <person name="Kirkpatrick H.A."/>
            <person name="Posfai G."/>
            <person name="Hackett J."/>
            <person name="Klink S."/>
            <person name="Boutin A."/>
            <person name="Shao Y."/>
            <person name="Miller L."/>
            <person name="Grotbeck E.J."/>
            <person name="Davis N.W."/>
            <person name="Lim A."/>
            <person name="Dimalanta E.T."/>
            <person name="Potamousis K."/>
            <person name="Apodaca J."/>
            <person name="Anantharaman T.S."/>
            <person name="Lin J."/>
            <person name="Yen G."/>
            <person name="Schwartz D.C."/>
            <person name="Welch R.A."/>
            <person name="Blattner F.R."/>
        </authorList>
    </citation>
    <scope>NUCLEOTIDE SEQUENCE [LARGE SCALE GENOMIC DNA]</scope>
    <source>
        <strain>O157:H7 / EDL933 / ATCC 700927 / EHEC</strain>
    </source>
</reference>
<reference key="2">
    <citation type="journal article" date="2001" name="DNA Res.">
        <title>Complete genome sequence of enterohemorrhagic Escherichia coli O157:H7 and genomic comparison with a laboratory strain K-12.</title>
        <authorList>
            <person name="Hayashi T."/>
            <person name="Makino K."/>
            <person name="Ohnishi M."/>
            <person name="Kurokawa K."/>
            <person name="Ishii K."/>
            <person name="Yokoyama K."/>
            <person name="Han C.-G."/>
            <person name="Ohtsubo E."/>
            <person name="Nakayama K."/>
            <person name="Murata T."/>
            <person name="Tanaka M."/>
            <person name="Tobe T."/>
            <person name="Iida T."/>
            <person name="Takami H."/>
            <person name="Honda T."/>
            <person name="Sasakawa C."/>
            <person name="Ogasawara N."/>
            <person name="Yasunaga T."/>
            <person name="Kuhara S."/>
            <person name="Shiba T."/>
            <person name="Hattori M."/>
            <person name="Shinagawa H."/>
        </authorList>
    </citation>
    <scope>NUCLEOTIDE SEQUENCE [LARGE SCALE GENOMIC DNA]</scope>
    <source>
        <strain>O157:H7 / Sakai / RIMD 0509952 / EHEC</strain>
    </source>
</reference>
<dbReference type="EC" id="2.8.1.8" evidence="1"/>
<dbReference type="EMBL" id="AE005174">
    <property type="protein sequence ID" value="AAG54962.1"/>
    <property type="molecule type" value="Genomic_DNA"/>
</dbReference>
<dbReference type="EMBL" id="BA000007">
    <property type="protein sequence ID" value="BAB34089.1"/>
    <property type="molecule type" value="Genomic_DNA"/>
</dbReference>
<dbReference type="PIR" id="B90712">
    <property type="entry name" value="B90712"/>
</dbReference>
<dbReference type="RefSeq" id="NP_308693.1">
    <property type="nucleotide sequence ID" value="NC_002695.1"/>
</dbReference>
<dbReference type="RefSeq" id="WP_000042632.1">
    <property type="nucleotide sequence ID" value="NZ_VOAI01000012.1"/>
</dbReference>
<dbReference type="SMR" id="P60718"/>
<dbReference type="STRING" id="155864.Z0773"/>
<dbReference type="GeneID" id="917026"/>
<dbReference type="GeneID" id="93776854"/>
<dbReference type="KEGG" id="ece:Z0773"/>
<dbReference type="KEGG" id="ecs:ECs_0666"/>
<dbReference type="PATRIC" id="fig|386585.9.peg.777"/>
<dbReference type="eggNOG" id="COG0320">
    <property type="taxonomic scope" value="Bacteria"/>
</dbReference>
<dbReference type="HOGENOM" id="CLU_033144_2_1_6"/>
<dbReference type="OMA" id="PYCDIDF"/>
<dbReference type="UniPathway" id="UPA00538">
    <property type="reaction ID" value="UER00593"/>
</dbReference>
<dbReference type="Proteomes" id="UP000000558">
    <property type="component" value="Chromosome"/>
</dbReference>
<dbReference type="Proteomes" id="UP000002519">
    <property type="component" value="Chromosome"/>
</dbReference>
<dbReference type="GO" id="GO:0005737">
    <property type="term" value="C:cytoplasm"/>
    <property type="evidence" value="ECO:0007669"/>
    <property type="project" value="UniProtKB-SubCell"/>
</dbReference>
<dbReference type="GO" id="GO:0051539">
    <property type="term" value="F:4 iron, 4 sulfur cluster binding"/>
    <property type="evidence" value="ECO:0007669"/>
    <property type="project" value="UniProtKB-UniRule"/>
</dbReference>
<dbReference type="GO" id="GO:0016992">
    <property type="term" value="F:lipoate synthase activity"/>
    <property type="evidence" value="ECO:0007669"/>
    <property type="project" value="UniProtKB-UniRule"/>
</dbReference>
<dbReference type="GO" id="GO:0046872">
    <property type="term" value="F:metal ion binding"/>
    <property type="evidence" value="ECO:0007669"/>
    <property type="project" value="UniProtKB-KW"/>
</dbReference>
<dbReference type="CDD" id="cd01335">
    <property type="entry name" value="Radical_SAM"/>
    <property type="match status" value="1"/>
</dbReference>
<dbReference type="FunFam" id="3.20.20.70:FF:000023">
    <property type="entry name" value="Lipoyl synthase"/>
    <property type="match status" value="1"/>
</dbReference>
<dbReference type="Gene3D" id="3.20.20.70">
    <property type="entry name" value="Aldolase class I"/>
    <property type="match status" value="1"/>
</dbReference>
<dbReference type="HAMAP" id="MF_00206">
    <property type="entry name" value="Lipoyl_synth"/>
    <property type="match status" value="1"/>
</dbReference>
<dbReference type="InterPro" id="IPR013785">
    <property type="entry name" value="Aldolase_TIM"/>
</dbReference>
<dbReference type="InterPro" id="IPR006638">
    <property type="entry name" value="Elp3/MiaA/NifB-like_rSAM"/>
</dbReference>
<dbReference type="InterPro" id="IPR031691">
    <property type="entry name" value="LIAS_N"/>
</dbReference>
<dbReference type="InterPro" id="IPR003698">
    <property type="entry name" value="Lipoyl_synth"/>
</dbReference>
<dbReference type="InterPro" id="IPR007197">
    <property type="entry name" value="rSAM"/>
</dbReference>
<dbReference type="NCBIfam" id="TIGR00510">
    <property type="entry name" value="lipA"/>
    <property type="match status" value="1"/>
</dbReference>
<dbReference type="NCBIfam" id="NF004019">
    <property type="entry name" value="PRK05481.1"/>
    <property type="match status" value="1"/>
</dbReference>
<dbReference type="NCBIfam" id="NF009544">
    <property type="entry name" value="PRK12928.1"/>
    <property type="match status" value="1"/>
</dbReference>
<dbReference type="PANTHER" id="PTHR10949">
    <property type="entry name" value="LIPOYL SYNTHASE"/>
    <property type="match status" value="1"/>
</dbReference>
<dbReference type="PANTHER" id="PTHR10949:SF0">
    <property type="entry name" value="LIPOYL SYNTHASE, MITOCHONDRIAL"/>
    <property type="match status" value="1"/>
</dbReference>
<dbReference type="Pfam" id="PF16881">
    <property type="entry name" value="LIAS_N"/>
    <property type="match status" value="1"/>
</dbReference>
<dbReference type="Pfam" id="PF04055">
    <property type="entry name" value="Radical_SAM"/>
    <property type="match status" value="1"/>
</dbReference>
<dbReference type="PIRSF" id="PIRSF005963">
    <property type="entry name" value="Lipoyl_synth"/>
    <property type="match status" value="1"/>
</dbReference>
<dbReference type="SFLD" id="SFLDF00271">
    <property type="entry name" value="lipoyl_synthase"/>
    <property type="match status" value="1"/>
</dbReference>
<dbReference type="SFLD" id="SFLDG01058">
    <property type="entry name" value="lipoyl_synthase_like"/>
    <property type="match status" value="1"/>
</dbReference>
<dbReference type="SMART" id="SM00729">
    <property type="entry name" value="Elp3"/>
    <property type="match status" value="1"/>
</dbReference>
<dbReference type="SUPFAM" id="SSF102114">
    <property type="entry name" value="Radical SAM enzymes"/>
    <property type="match status" value="1"/>
</dbReference>
<dbReference type="PROSITE" id="PS51918">
    <property type="entry name" value="RADICAL_SAM"/>
    <property type="match status" value="1"/>
</dbReference>
<organism>
    <name type="scientific">Escherichia coli O157:H7</name>
    <dbReference type="NCBI Taxonomy" id="83334"/>
    <lineage>
        <taxon>Bacteria</taxon>
        <taxon>Pseudomonadati</taxon>
        <taxon>Pseudomonadota</taxon>
        <taxon>Gammaproteobacteria</taxon>
        <taxon>Enterobacterales</taxon>
        <taxon>Enterobacteriaceae</taxon>
        <taxon>Escherichia</taxon>
    </lineage>
</organism>
<keyword id="KW-0004">4Fe-4S</keyword>
<keyword id="KW-0963">Cytoplasm</keyword>
<keyword id="KW-0408">Iron</keyword>
<keyword id="KW-0411">Iron-sulfur</keyword>
<keyword id="KW-0479">Metal-binding</keyword>
<keyword id="KW-1185">Reference proteome</keyword>
<keyword id="KW-0949">S-adenosyl-L-methionine</keyword>
<keyword id="KW-0808">Transferase</keyword>
<accession>P60718</accession>
<accession>P25845</accession>
<accession>P77595</accession>
<comment type="function">
    <text evidence="1">Catalyzes the radical-mediated insertion of two sulfur atoms into the C-6 and C-8 positions of the octanoyl moiety bound to the lipoyl domains of lipoate-dependent enzymes, thereby converting the octanoylated domains into lipoylated derivatives.</text>
</comment>
<comment type="catalytic activity">
    <reaction evidence="1">
        <text>[[Fe-S] cluster scaffold protein carrying a second [4Fe-4S](2+) cluster] + N(6)-octanoyl-L-lysyl-[protein] + 2 oxidized [2Fe-2S]-[ferredoxin] + 2 S-adenosyl-L-methionine + 4 H(+) = [[Fe-S] cluster scaffold protein] + N(6)-[(R)-dihydrolipoyl]-L-lysyl-[protein] + 4 Fe(3+) + 2 hydrogen sulfide + 2 5'-deoxyadenosine + 2 L-methionine + 2 reduced [2Fe-2S]-[ferredoxin]</text>
        <dbReference type="Rhea" id="RHEA:16585"/>
        <dbReference type="Rhea" id="RHEA-COMP:9928"/>
        <dbReference type="Rhea" id="RHEA-COMP:10000"/>
        <dbReference type="Rhea" id="RHEA-COMP:10001"/>
        <dbReference type="Rhea" id="RHEA-COMP:10475"/>
        <dbReference type="Rhea" id="RHEA-COMP:14568"/>
        <dbReference type="Rhea" id="RHEA-COMP:14569"/>
        <dbReference type="ChEBI" id="CHEBI:15378"/>
        <dbReference type="ChEBI" id="CHEBI:17319"/>
        <dbReference type="ChEBI" id="CHEBI:29034"/>
        <dbReference type="ChEBI" id="CHEBI:29919"/>
        <dbReference type="ChEBI" id="CHEBI:33722"/>
        <dbReference type="ChEBI" id="CHEBI:33737"/>
        <dbReference type="ChEBI" id="CHEBI:33738"/>
        <dbReference type="ChEBI" id="CHEBI:57844"/>
        <dbReference type="ChEBI" id="CHEBI:59789"/>
        <dbReference type="ChEBI" id="CHEBI:78809"/>
        <dbReference type="ChEBI" id="CHEBI:83100"/>
        <dbReference type="EC" id="2.8.1.8"/>
    </reaction>
</comment>
<comment type="cofactor">
    <cofactor evidence="1">
        <name>[4Fe-4S] cluster</name>
        <dbReference type="ChEBI" id="CHEBI:49883"/>
    </cofactor>
    <text evidence="1">Binds 2 [4Fe-4S] clusters per subunit. One cluster is coordinated with 3 cysteines and an exchangeable S-adenosyl-L-methionine.</text>
</comment>
<comment type="pathway">
    <text evidence="1">Protein modification; protein lipoylation via endogenous pathway; protein N(6)-(lipoyl)lysine from octanoyl-[acyl-carrier-protein]: step 2/2.</text>
</comment>
<comment type="subcellular location">
    <subcellularLocation>
        <location evidence="1">Cytoplasm</location>
    </subcellularLocation>
</comment>
<comment type="similarity">
    <text evidence="1">Belongs to the radical SAM superfamily. Lipoyl synthase family.</text>
</comment>
<name>LIPA_ECO57</name>
<evidence type="ECO:0000255" key="1">
    <source>
        <dbReference type="HAMAP-Rule" id="MF_00206"/>
    </source>
</evidence>
<evidence type="ECO:0000255" key="2">
    <source>
        <dbReference type="PROSITE-ProRule" id="PRU01266"/>
    </source>
</evidence>
<feature type="chain" id="PRO_0000102315" description="Lipoyl synthase">
    <location>
        <begin position="1"/>
        <end position="321"/>
    </location>
</feature>
<feature type="domain" description="Radical SAM core" evidence="2">
    <location>
        <begin position="80"/>
        <end position="297"/>
    </location>
</feature>
<feature type="binding site" evidence="1">
    <location>
        <position position="68"/>
    </location>
    <ligand>
        <name>[4Fe-4S] cluster</name>
        <dbReference type="ChEBI" id="CHEBI:49883"/>
        <label>1</label>
    </ligand>
</feature>
<feature type="binding site" evidence="1">
    <location>
        <position position="73"/>
    </location>
    <ligand>
        <name>[4Fe-4S] cluster</name>
        <dbReference type="ChEBI" id="CHEBI:49883"/>
        <label>1</label>
    </ligand>
</feature>
<feature type="binding site" evidence="1">
    <location>
        <position position="79"/>
    </location>
    <ligand>
        <name>[4Fe-4S] cluster</name>
        <dbReference type="ChEBI" id="CHEBI:49883"/>
        <label>1</label>
    </ligand>
</feature>
<feature type="binding site" evidence="1">
    <location>
        <position position="94"/>
    </location>
    <ligand>
        <name>[4Fe-4S] cluster</name>
        <dbReference type="ChEBI" id="CHEBI:49883"/>
        <label>2</label>
        <note>4Fe-4S-S-AdoMet</note>
    </ligand>
</feature>
<feature type="binding site" evidence="1">
    <location>
        <position position="98"/>
    </location>
    <ligand>
        <name>[4Fe-4S] cluster</name>
        <dbReference type="ChEBI" id="CHEBI:49883"/>
        <label>2</label>
        <note>4Fe-4S-S-AdoMet</note>
    </ligand>
</feature>
<feature type="binding site" evidence="1">
    <location>
        <position position="101"/>
    </location>
    <ligand>
        <name>[4Fe-4S] cluster</name>
        <dbReference type="ChEBI" id="CHEBI:49883"/>
        <label>2</label>
        <note>4Fe-4S-S-AdoMet</note>
    </ligand>
</feature>
<feature type="binding site" evidence="1">
    <location>
        <position position="308"/>
    </location>
    <ligand>
        <name>[4Fe-4S] cluster</name>
        <dbReference type="ChEBI" id="CHEBI:49883"/>
        <label>1</label>
    </ligand>
</feature>
<sequence length="321" mass="36072">MSKPIVMERGVKYRDADKMALIPVKNVATEREALLRKPEWMKIKLPADSTRIQGIKAAMRKNGLHSVCEEASCPNLAECFNHGTATFMILGAICTRRCPFCDVAHGRPVAPDANEPVKLAQTIADMALRYVVITSVDRDDLRDGGAQHFADCITAIREKSPQIKIETLVPDFRGRMDRALDILTATPPDVFNHNLENVPRIYRQVRPGADYNWSLKLLERFKEAHPEIPTKSGLMVGLGETNEEIIEVMRDLRRHGVTMLTLGQYLQPSRHHLPVQRYVSPDEFDEMKAEALAMGFTHAACGPFVRSSYHADLQAKGMEVK</sequence>
<gene>
    <name evidence="1" type="primary">lipA</name>
    <name type="ordered locus">Z0773</name>
    <name type="ordered locus">ECs0666</name>
</gene>